<proteinExistence type="inferred from homology"/>
<evidence type="ECO:0000250" key="1"/>
<evidence type="ECO:0000255" key="2"/>
<evidence type="ECO:0000305" key="3"/>
<dbReference type="EC" id="1.18.6.1"/>
<dbReference type="EMBL" id="X07475">
    <property type="protein sequence ID" value="CAA30362.1"/>
    <property type="molecule type" value="Genomic_DNA"/>
</dbReference>
<dbReference type="PIR" id="S01725">
    <property type="entry name" value="S01725"/>
</dbReference>
<dbReference type="SMR" id="P22548"/>
<dbReference type="OrthoDB" id="9778641at2"/>
<dbReference type="GO" id="GO:0051539">
    <property type="term" value="F:4 iron, 4 sulfur cluster binding"/>
    <property type="evidence" value="ECO:0007669"/>
    <property type="project" value="UniProtKB-KW"/>
</dbReference>
<dbReference type="GO" id="GO:0005524">
    <property type="term" value="F:ATP binding"/>
    <property type="evidence" value="ECO:0007669"/>
    <property type="project" value="UniProtKB-UniRule"/>
</dbReference>
<dbReference type="GO" id="GO:0046872">
    <property type="term" value="F:metal ion binding"/>
    <property type="evidence" value="ECO:0007669"/>
    <property type="project" value="UniProtKB-KW"/>
</dbReference>
<dbReference type="GO" id="GO:0016163">
    <property type="term" value="F:nitrogenase activity"/>
    <property type="evidence" value="ECO:0007669"/>
    <property type="project" value="UniProtKB-UniRule"/>
</dbReference>
<dbReference type="GO" id="GO:0009399">
    <property type="term" value="P:nitrogen fixation"/>
    <property type="evidence" value="ECO:0007669"/>
    <property type="project" value="UniProtKB-UniRule"/>
</dbReference>
<dbReference type="CDD" id="cd02040">
    <property type="entry name" value="NifH"/>
    <property type="match status" value="1"/>
</dbReference>
<dbReference type="Gene3D" id="3.40.50.300">
    <property type="entry name" value="P-loop containing nucleotide triphosphate hydrolases"/>
    <property type="match status" value="1"/>
</dbReference>
<dbReference type="HAMAP" id="MF_00533">
    <property type="entry name" value="NifH"/>
    <property type="match status" value="1"/>
</dbReference>
<dbReference type="InterPro" id="IPR030655">
    <property type="entry name" value="NifH/chlL_CS"/>
</dbReference>
<dbReference type="InterPro" id="IPR000392">
    <property type="entry name" value="NifH/frxC"/>
</dbReference>
<dbReference type="InterPro" id="IPR005977">
    <property type="entry name" value="Nitrogenase_Fe_NifH"/>
</dbReference>
<dbReference type="InterPro" id="IPR027417">
    <property type="entry name" value="P-loop_NTPase"/>
</dbReference>
<dbReference type="NCBIfam" id="TIGR01287">
    <property type="entry name" value="nifH"/>
    <property type="match status" value="1"/>
</dbReference>
<dbReference type="PANTHER" id="PTHR42864">
    <property type="entry name" value="LIGHT-INDEPENDENT PROTOCHLOROPHYLLIDE REDUCTASE IRON-SULFUR ATP-BINDING PROTEIN"/>
    <property type="match status" value="1"/>
</dbReference>
<dbReference type="PANTHER" id="PTHR42864:SF2">
    <property type="entry name" value="LIGHT-INDEPENDENT PROTOCHLOROPHYLLIDE REDUCTASE IRON-SULFUR ATP-BINDING PROTEIN"/>
    <property type="match status" value="1"/>
</dbReference>
<dbReference type="Pfam" id="PF00142">
    <property type="entry name" value="Fer4_NifH"/>
    <property type="match status" value="1"/>
</dbReference>
<dbReference type="PIRSF" id="PIRSF000363">
    <property type="entry name" value="Nitrogenase_iron"/>
    <property type="match status" value="1"/>
</dbReference>
<dbReference type="PRINTS" id="PR00091">
    <property type="entry name" value="NITROGNASEII"/>
</dbReference>
<dbReference type="SUPFAM" id="SSF52540">
    <property type="entry name" value="P-loop containing nucleoside triphosphate hydrolases"/>
    <property type="match status" value="1"/>
</dbReference>
<dbReference type="PROSITE" id="PS00746">
    <property type="entry name" value="NIFH_FRXC_1"/>
    <property type="match status" value="1"/>
</dbReference>
<dbReference type="PROSITE" id="PS00692">
    <property type="entry name" value="NIFH_FRXC_2"/>
    <property type="match status" value="1"/>
</dbReference>
<dbReference type="PROSITE" id="PS51026">
    <property type="entry name" value="NIFH_FRXC_3"/>
    <property type="match status" value="1"/>
</dbReference>
<gene>
    <name type="primary">nifH4</name>
</gene>
<protein>
    <recommendedName>
        <fullName>Nitrogenase iron protein 4</fullName>
        <ecNumber>1.18.6.1</ecNumber>
    </recommendedName>
    <alternativeName>
        <fullName>Nitrogenase Fe protein 4</fullName>
    </alternativeName>
    <alternativeName>
        <fullName>Nitrogenase component II</fullName>
    </alternativeName>
    <alternativeName>
        <fullName>Nitrogenase reductase</fullName>
    </alternativeName>
</protein>
<organism>
    <name type="scientific">Clostridium pasteurianum</name>
    <dbReference type="NCBI Taxonomy" id="1501"/>
    <lineage>
        <taxon>Bacteria</taxon>
        <taxon>Bacillati</taxon>
        <taxon>Bacillota</taxon>
        <taxon>Clostridia</taxon>
        <taxon>Eubacteriales</taxon>
        <taxon>Clostridiaceae</taxon>
        <taxon>Clostridium</taxon>
    </lineage>
</organism>
<accession>P22548</accession>
<comment type="function">
    <text evidence="1">The key enzymatic reactions in nitrogen fixation are catalyzed by the nitrogenase complex, which has 2 components: the iron protein and the molybdenum-iron protein.</text>
</comment>
<comment type="catalytic activity">
    <reaction>
        <text>N2 + 8 reduced [2Fe-2S]-[ferredoxin] + 16 ATP + 16 H2O = H2 + 8 oxidized [2Fe-2S]-[ferredoxin] + 2 NH4(+) + 16 ADP + 16 phosphate + 6 H(+)</text>
        <dbReference type="Rhea" id="RHEA:21448"/>
        <dbReference type="Rhea" id="RHEA-COMP:10000"/>
        <dbReference type="Rhea" id="RHEA-COMP:10001"/>
        <dbReference type="ChEBI" id="CHEBI:15377"/>
        <dbReference type="ChEBI" id="CHEBI:15378"/>
        <dbReference type="ChEBI" id="CHEBI:17997"/>
        <dbReference type="ChEBI" id="CHEBI:18276"/>
        <dbReference type="ChEBI" id="CHEBI:28938"/>
        <dbReference type="ChEBI" id="CHEBI:30616"/>
        <dbReference type="ChEBI" id="CHEBI:33737"/>
        <dbReference type="ChEBI" id="CHEBI:33738"/>
        <dbReference type="ChEBI" id="CHEBI:43474"/>
        <dbReference type="ChEBI" id="CHEBI:456216"/>
        <dbReference type="EC" id="1.18.6.1"/>
    </reaction>
</comment>
<comment type="cofactor">
    <cofactor evidence="1">
        <name>[4Fe-4S] cluster</name>
        <dbReference type="ChEBI" id="CHEBI:49883"/>
    </cofactor>
    <text evidence="1">Binds 1 [4Fe-4S] cluster per dimer.</text>
</comment>
<comment type="subunit">
    <text evidence="1">Homodimer.</text>
</comment>
<comment type="PTM">
    <text evidence="1">The reversible ADP-ribosylation of Arg-97 inactivates the nitrogenase reductase and regulates nitrogenase activity.</text>
</comment>
<comment type="similarity">
    <text evidence="3">Belongs to the NifH/BchL/ChlL family.</text>
</comment>
<feature type="chain" id="PRO_0000139501" description="Nitrogenase iron protein 4">
    <location>
        <begin position="1"/>
        <end position="273"/>
    </location>
</feature>
<feature type="binding site" evidence="2">
    <location>
        <begin position="8"/>
        <end position="15"/>
    </location>
    <ligand>
        <name>ATP</name>
        <dbReference type="ChEBI" id="CHEBI:30616"/>
    </ligand>
</feature>
<feature type="binding site" evidence="1">
    <location>
        <position position="94"/>
    </location>
    <ligand>
        <name>[4Fe-4S] cluster</name>
        <dbReference type="ChEBI" id="CHEBI:49883"/>
        <note>ligand shared between dimeric partners</note>
    </ligand>
</feature>
<feature type="binding site" evidence="1">
    <location>
        <position position="129"/>
    </location>
    <ligand>
        <name>[4Fe-4S] cluster</name>
        <dbReference type="ChEBI" id="CHEBI:49883"/>
        <note>ligand shared between dimeric partners</note>
    </ligand>
</feature>
<feature type="modified residue" description="ADP-ribosylarginine; by dinitrogenase reductase ADP-ribosyltransferase" evidence="1">
    <location>
        <position position="97"/>
    </location>
</feature>
<name>NIFH4_CLOPA</name>
<keyword id="KW-0004">4Fe-4S</keyword>
<keyword id="KW-0013">ADP-ribosylation</keyword>
<keyword id="KW-0067">ATP-binding</keyword>
<keyword id="KW-0408">Iron</keyword>
<keyword id="KW-0411">Iron-sulfur</keyword>
<keyword id="KW-0479">Metal-binding</keyword>
<keyword id="KW-0535">Nitrogen fixation</keyword>
<keyword id="KW-0547">Nucleotide-binding</keyword>
<keyword id="KW-0560">Oxidoreductase</keyword>
<sequence length="273" mass="29650">MRQVAIYGKGGIGKSTTTQNLTAGLAERGNKIMVVGCDPKADSTRLLLGGLAQKSVLDTLREEGEDVELDSILKEGFGGIRCVESGGPEPGVGCAGRGIITSINMLEQLGAYTDDLDYVFYDVLGDVVCGGFAMPIREGKAQEIYIVASGEMMALYAANNISKGIQKYAKSGGVRLGGIICNSRKVANEYELLDAFAKELGSQLIHFVPRSPMVTKAEINKKTVIDFDPKSEQADEYRELARKIDENELFVIPKPMTQERLEEILVQYGLNDL</sequence>
<reference key="1">
    <citation type="journal article" date="1988" name="Nucleic Acids Res.">
        <title>The presence of five nifH-like sequences in Clostridium pasteurianum: sequence divergence and transcription properties.</title>
        <authorList>
            <person name="Wang S.-Z."/>
            <person name="Chen J.-S."/>
            <person name="Johnson J.L."/>
        </authorList>
    </citation>
    <scope>NUCLEOTIDE SEQUENCE [GENOMIC DNA]</scope>
</reference>